<accession>Q9RA32</accession>
<keyword id="KW-0963">Cytoplasm</keyword>
<keyword id="KW-0275">Fatty acid biosynthesis</keyword>
<keyword id="KW-0276">Fatty acid metabolism</keyword>
<keyword id="KW-0444">Lipid biosynthesis</keyword>
<keyword id="KW-0443">Lipid metabolism</keyword>
<keyword id="KW-0596">Phosphopantetheine</keyword>
<keyword id="KW-0597">Phosphoprotein</keyword>
<evidence type="ECO:0000255" key="1">
    <source>
        <dbReference type="HAMAP-Rule" id="MF_01217"/>
    </source>
</evidence>
<evidence type="ECO:0000255" key="2">
    <source>
        <dbReference type="PROSITE-ProRule" id="PRU00258"/>
    </source>
</evidence>
<name>ACP_MORMI</name>
<comment type="function">
    <text evidence="1">Carrier of the growing fatty acid chain in fatty acid biosynthesis (By similarity). Is probably involved in the biosynthesis of docosahexaenoic acid (DHA) which is produced by this bacterium as a fatty acyl component in its membrane lipid.</text>
</comment>
<comment type="pathway">
    <text evidence="1">Lipid metabolism; fatty acid biosynthesis.</text>
</comment>
<comment type="subcellular location">
    <subcellularLocation>
        <location evidence="1">Cytoplasm</location>
    </subcellularLocation>
</comment>
<comment type="PTM">
    <text evidence="1">4'-phosphopantetheine is transferred from CoA to a specific serine of apo-ACP by AcpS. This modification is essential for activity because fatty acids are bound in thioester linkage to the sulfhydryl of the prosthetic group.</text>
</comment>
<comment type="similarity">
    <text evidence="1">Belongs to the acyl carrier protein (ACP) family.</text>
</comment>
<dbReference type="EMBL" id="AB021978">
    <property type="protein sequence ID" value="BAA85257.1"/>
    <property type="molecule type" value="Genomic_DNA"/>
</dbReference>
<dbReference type="PIR" id="T44435">
    <property type="entry name" value="T44435"/>
</dbReference>
<dbReference type="SMR" id="Q9RA32"/>
<dbReference type="UniPathway" id="UPA00094"/>
<dbReference type="GO" id="GO:0005829">
    <property type="term" value="C:cytosol"/>
    <property type="evidence" value="ECO:0007669"/>
    <property type="project" value="TreeGrafter"/>
</dbReference>
<dbReference type="GO" id="GO:0016020">
    <property type="term" value="C:membrane"/>
    <property type="evidence" value="ECO:0007669"/>
    <property type="project" value="GOC"/>
</dbReference>
<dbReference type="GO" id="GO:0000035">
    <property type="term" value="F:acyl binding"/>
    <property type="evidence" value="ECO:0007669"/>
    <property type="project" value="TreeGrafter"/>
</dbReference>
<dbReference type="GO" id="GO:0000036">
    <property type="term" value="F:acyl carrier activity"/>
    <property type="evidence" value="ECO:0007669"/>
    <property type="project" value="UniProtKB-UniRule"/>
</dbReference>
<dbReference type="GO" id="GO:0009245">
    <property type="term" value="P:lipid A biosynthetic process"/>
    <property type="evidence" value="ECO:0007669"/>
    <property type="project" value="TreeGrafter"/>
</dbReference>
<dbReference type="FunFam" id="1.10.1200.10:FF:000001">
    <property type="entry name" value="Acyl carrier protein"/>
    <property type="match status" value="1"/>
</dbReference>
<dbReference type="Gene3D" id="1.10.1200.10">
    <property type="entry name" value="ACP-like"/>
    <property type="match status" value="1"/>
</dbReference>
<dbReference type="HAMAP" id="MF_01217">
    <property type="entry name" value="Acyl_carrier"/>
    <property type="match status" value="1"/>
</dbReference>
<dbReference type="InterPro" id="IPR003231">
    <property type="entry name" value="ACP"/>
</dbReference>
<dbReference type="InterPro" id="IPR036736">
    <property type="entry name" value="ACP-like_sf"/>
</dbReference>
<dbReference type="InterPro" id="IPR009081">
    <property type="entry name" value="PP-bd_ACP"/>
</dbReference>
<dbReference type="InterPro" id="IPR006162">
    <property type="entry name" value="Ppantetheine_attach_site"/>
</dbReference>
<dbReference type="NCBIfam" id="TIGR00517">
    <property type="entry name" value="acyl_carrier"/>
    <property type="match status" value="1"/>
</dbReference>
<dbReference type="NCBIfam" id="NF002148">
    <property type="entry name" value="PRK00982.1-2"/>
    <property type="match status" value="1"/>
</dbReference>
<dbReference type="NCBIfam" id="NF002149">
    <property type="entry name" value="PRK00982.1-3"/>
    <property type="match status" value="1"/>
</dbReference>
<dbReference type="NCBIfam" id="NF002150">
    <property type="entry name" value="PRK00982.1-4"/>
    <property type="match status" value="1"/>
</dbReference>
<dbReference type="NCBIfam" id="NF002151">
    <property type="entry name" value="PRK00982.1-5"/>
    <property type="match status" value="1"/>
</dbReference>
<dbReference type="PANTHER" id="PTHR20863">
    <property type="entry name" value="ACYL CARRIER PROTEIN"/>
    <property type="match status" value="1"/>
</dbReference>
<dbReference type="PANTHER" id="PTHR20863:SF76">
    <property type="entry name" value="CARRIER DOMAIN-CONTAINING PROTEIN"/>
    <property type="match status" value="1"/>
</dbReference>
<dbReference type="Pfam" id="PF00550">
    <property type="entry name" value="PP-binding"/>
    <property type="match status" value="1"/>
</dbReference>
<dbReference type="SUPFAM" id="SSF47336">
    <property type="entry name" value="ACP-like"/>
    <property type="match status" value="1"/>
</dbReference>
<dbReference type="PROSITE" id="PS50075">
    <property type="entry name" value="CARRIER"/>
    <property type="match status" value="1"/>
</dbReference>
<dbReference type="PROSITE" id="PS00012">
    <property type="entry name" value="PHOSPHOPANTETHEINE"/>
    <property type="match status" value="1"/>
</dbReference>
<protein>
    <recommendedName>
        <fullName evidence="1">Acyl carrier protein</fullName>
        <shortName evidence="1">ACP</shortName>
    </recommendedName>
</protein>
<organism>
    <name type="scientific">Moritella marina</name>
    <name type="common">Vibrio marinus</name>
    <dbReference type="NCBI Taxonomy" id="90736"/>
    <lineage>
        <taxon>Bacteria</taxon>
        <taxon>Pseudomonadati</taxon>
        <taxon>Pseudomonadota</taxon>
        <taxon>Gammaproteobacteria</taxon>
        <taxon>Alteromonadales</taxon>
        <taxon>Moritellaceae</taxon>
        <taxon>Moritella</taxon>
    </lineage>
</organism>
<feature type="initiator methionine" description="Removed">
    <location>
        <position position="1"/>
    </location>
</feature>
<feature type="chain" id="PRO_0000180215" description="Acyl carrier protein">
    <location>
        <begin position="2"/>
        <end position="78"/>
    </location>
</feature>
<feature type="domain" description="Carrier" evidence="2">
    <location>
        <begin position="2"/>
        <end position="77"/>
    </location>
</feature>
<feature type="modified residue" description="O-(pantetheine 4'-phosphoryl)serine" evidence="2">
    <location>
        <position position="37"/>
    </location>
</feature>
<sequence>MSNFEERVKKIIIEQLGVKEEEVKNEASFVDDLGADSLDTVELVMALEEEFDTDIPDDEAEKITTVQAAIDYVVSSAE</sequence>
<gene>
    <name evidence="1" type="primary">acpP</name>
</gene>
<reference key="1">
    <citation type="journal article" date="1999" name="Biotechnol. Lett.">
        <title>Cloning and sequencing of clustered genes involved in fatty acid biosynthesis from the docosahexaenoic acid-producing bacterium, Vibrio marinus strain MP-1.</title>
        <authorList>
            <person name="Morita N."/>
            <person name="Ueno A."/>
            <person name="Tamaka M."/>
            <person name="Ohgiya S."/>
            <person name="Hoshino T."/>
            <person name="Kawasaki K."/>
            <person name="Yumoto I."/>
            <person name="Ishizaki K."/>
            <person name="Okuyama H."/>
        </authorList>
    </citation>
    <scope>NUCLEOTIDE SEQUENCE [GENOMIC DNA]</scope>
    <source>
        <strain>ATCC 15381 / BCRC 15891 / CIP 102861 / NCIMB 1144 / MP-1</strain>
    </source>
</reference>
<proteinExistence type="inferred from homology"/>